<dbReference type="EC" id="2.3.1.129" evidence="1"/>
<dbReference type="EMBL" id="AM181176">
    <property type="protein sequence ID" value="CAY47539.1"/>
    <property type="molecule type" value="Genomic_DNA"/>
</dbReference>
<dbReference type="RefSeq" id="WP_012722603.1">
    <property type="nucleotide sequence ID" value="NC_012660.1"/>
</dbReference>
<dbReference type="SMR" id="C3K607"/>
<dbReference type="STRING" id="294.SRM1_01141"/>
<dbReference type="GeneID" id="93462898"/>
<dbReference type="eggNOG" id="COG1043">
    <property type="taxonomic scope" value="Bacteria"/>
</dbReference>
<dbReference type="HOGENOM" id="CLU_061249_0_0_6"/>
<dbReference type="OrthoDB" id="9807278at2"/>
<dbReference type="UniPathway" id="UPA00359">
    <property type="reaction ID" value="UER00477"/>
</dbReference>
<dbReference type="GO" id="GO:0005737">
    <property type="term" value="C:cytoplasm"/>
    <property type="evidence" value="ECO:0007669"/>
    <property type="project" value="UniProtKB-SubCell"/>
</dbReference>
<dbReference type="GO" id="GO:0016020">
    <property type="term" value="C:membrane"/>
    <property type="evidence" value="ECO:0007669"/>
    <property type="project" value="GOC"/>
</dbReference>
<dbReference type="GO" id="GO:0008780">
    <property type="term" value="F:acyl-[acyl-carrier-protein]-UDP-N-acetylglucosamine O-acyltransferase activity"/>
    <property type="evidence" value="ECO:0007669"/>
    <property type="project" value="UniProtKB-UniRule"/>
</dbReference>
<dbReference type="GO" id="GO:0009245">
    <property type="term" value="P:lipid A biosynthetic process"/>
    <property type="evidence" value="ECO:0007669"/>
    <property type="project" value="UniProtKB-UniRule"/>
</dbReference>
<dbReference type="CDD" id="cd03351">
    <property type="entry name" value="LbH_UDP-GlcNAc_AT"/>
    <property type="match status" value="1"/>
</dbReference>
<dbReference type="FunFam" id="2.160.10.10:FF:000003">
    <property type="entry name" value="Acyl-[acyl-carrier-protein]--UDP-N-acetylglucosamine O-acyltransferase"/>
    <property type="match status" value="1"/>
</dbReference>
<dbReference type="Gene3D" id="2.160.10.10">
    <property type="entry name" value="Hexapeptide repeat proteins"/>
    <property type="match status" value="1"/>
</dbReference>
<dbReference type="Gene3D" id="1.20.1180.10">
    <property type="entry name" value="Udp N-acetylglucosamine O-acyltransferase, C-terminal domain"/>
    <property type="match status" value="1"/>
</dbReference>
<dbReference type="HAMAP" id="MF_00387">
    <property type="entry name" value="LpxA"/>
    <property type="match status" value="1"/>
</dbReference>
<dbReference type="InterPro" id="IPR029098">
    <property type="entry name" value="Acetyltransf_C"/>
</dbReference>
<dbReference type="InterPro" id="IPR037157">
    <property type="entry name" value="Acetyltransf_C_sf"/>
</dbReference>
<dbReference type="InterPro" id="IPR001451">
    <property type="entry name" value="Hexapep"/>
</dbReference>
<dbReference type="InterPro" id="IPR018357">
    <property type="entry name" value="Hexapep_transf_CS"/>
</dbReference>
<dbReference type="InterPro" id="IPR010137">
    <property type="entry name" value="Lipid_A_LpxA"/>
</dbReference>
<dbReference type="InterPro" id="IPR011004">
    <property type="entry name" value="Trimer_LpxA-like_sf"/>
</dbReference>
<dbReference type="NCBIfam" id="TIGR01852">
    <property type="entry name" value="lipid_A_lpxA"/>
    <property type="match status" value="1"/>
</dbReference>
<dbReference type="NCBIfam" id="NF003657">
    <property type="entry name" value="PRK05289.1"/>
    <property type="match status" value="1"/>
</dbReference>
<dbReference type="PANTHER" id="PTHR43480">
    <property type="entry name" value="ACYL-[ACYL-CARRIER-PROTEIN]--UDP-N-ACETYLGLUCOSAMINE O-ACYLTRANSFERASE"/>
    <property type="match status" value="1"/>
</dbReference>
<dbReference type="PANTHER" id="PTHR43480:SF1">
    <property type="entry name" value="ACYL-[ACYL-CARRIER-PROTEIN]--UDP-N-ACETYLGLUCOSAMINE O-ACYLTRANSFERASE, MITOCHONDRIAL-RELATED"/>
    <property type="match status" value="1"/>
</dbReference>
<dbReference type="Pfam" id="PF13720">
    <property type="entry name" value="Acetyltransf_11"/>
    <property type="match status" value="1"/>
</dbReference>
<dbReference type="Pfam" id="PF00132">
    <property type="entry name" value="Hexapep"/>
    <property type="match status" value="1"/>
</dbReference>
<dbReference type="PIRSF" id="PIRSF000456">
    <property type="entry name" value="UDP-GlcNAc_acltr"/>
    <property type="match status" value="1"/>
</dbReference>
<dbReference type="SUPFAM" id="SSF51161">
    <property type="entry name" value="Trimeric LpxA-like enzymes"/>
    <property type="match status" value="1"/>
</dbReference>
<dbReference type="PROSITE" id="PS00101">
    <property type="entry name" value="HEXAPEP_TRANSFERASES"/>
    <property type="match status" value="1"/>
</dbReference>
<protein>
    <recommendedName>
        <fullName evidence="1">Acyl-[acyl-carrier-protein]--UDP-N-acetylglucosamine O-acyltransferase</fullName>
        <shortName evidence="1">UDP-N-acetylglucosamine acyltransferase</shortName>
        <ecNumber evidence="1">2.3.1.129</ecNumber>
    </recommendedName>
</protein>
<reference key="1">
    <citation type="journal article" date="2009" name="Genome Biol.">
        <title>Genomic and genetic analyses of diversity and plant interactions of Pseudomonas fluorescens.</title>
        <authorList>
            <person name="Silby M.W."/>
            <person name="Cerdeno-Tarraga A.M."/>
            <person name="Vernikos G.S."/>
            <person name="Giddens S.R."/>
            <person name="Jackson R.W."/>
            <person name="Preston G.M."/>
            <person name="Zhang X.-X."/>
            <person name="Moon C.D."/>
            <person name="Gehrig S.M."/>
            <person name="Godfrey S.A.C."/>
            <person name="Knight C.G."/>
            <person name="Malone J.G."/>
            <person name="Robinson Z."/>
            <person name="Spiers A.J."/>
            <person name="Harris S."/>
            <person name="Challis G.L."/>
            <person name="Yaxley A.M."/>
            <person name="Harris D."/>
            <person name="Seeger K."/>
            <person name="Murphy L."/>
            <person name="Rutter S."/>
            <person name="Squares R."/>
            <person name="Quail M.A."/>
            <person name="Saunders E."/>
            <person name="Mavromatis K."/>
            <person name="Brettin T.S."/>
            <person name="Bentley S.D."/>
            <person name="Hothersall J."/>
            <person name="Stephens E."/>
            <person name="Thomas C.M."/>
            <person name="Parkhill J."/>
            <person name="Levy S.B."/>
            <person name="Rainey P.B."/>
            <person name="Thomson N.R."/>
        </authorList>
    </citation>
    <scope>NUCLEOTIDE SEQUENCE [LARGE SCALE GENOMIC DNA]</scope>
    <source>
        <strain>SBW25</strain>
    </source>
</reference>
<evidence type="ECO:0000255" key="1">
    <source>
        <dbReference type="HAMAP-Rule" id="MF_00387"/>
    </source>
</evidence>
<name>LPXA_PSEFS</name>
<sequence>MSLIDPRAIIDPSAVLAADVEVGPWSIIGAGVEIGEGTVIGPHVILKGPTRIGKHNRIYQFSSVGEDTPDMKYKGEETRLVIGDHNIIREGVTIHRGTVQDRAETTLGDHNLVMAYAHIGHDSVIGNHCILVNNTALAGHVHVDDWAILSGFTLVHQYCHIGAHSFSGMGTAIGKDVPAFVTVFGNPAEARSMNFEGMRRRGFSEEAIHALRRAYKVVYRQGLTVDQALTQLLEPAALFPEVAVFRDSIQASTRGITR</sequence>
<keyword id="KW-0012">Acyltransferase</keyword>
<keyword id="KW-0963">Cytoplasm</keyword>
<keyword id="KW-0441">Lipid A biosynthesis</keyword>
<keyword id="KW-0444">Lipid biosynthesis</keyword>
<keyword id="KW-0443">Lipid metabolism</keyword>
<keyword id="KW-0677">Repeat</keyword>
<keyword id="KW-0808">Transferase</keyword>
<organism>
    <name type="scientific">Pseudomonas fluorescens (strain SBW25)</name>
    <dbReference type="NCBI Taxonomy" id="216595"/>
    <lineage>
        <taxon>Bacteria</taxon>
        <taxon>Pseudomonadati</taxon>
        <taxon>Pseudomonadota</taxon>
        <taxon>Gammaproteobacteria</taxon>
        <taxon>Pseudomonadales</taxon>
        <taxon>Pseudomonadaceae</taxon>
        <taxon>Pseudomonas</taxon>
    </lineage>
</organism>
<comment type="function">
    <text evidence="1">Involved in the biosynthesis of lipid A, a phosphorylated glycolipid that anchors the lipopolysaccharide to the outer membrane of the cell.</text>
</comment>
<comment type="catalytic activity">
    <reaction evidence="1">
        <text>a (3R)-hydroxyacyl-[ACP] + UDP-N-acetyl-alpha-D-glucosamine = a UDP-3-O-[(3R)-3-hydroxyacyl]-N-acetyl-alpha-D-glucosamine + holo-[ACP]</text>
        <dbReference type="Rhea" id="RHEA:67812"/>
        <dbReference type="Rhea" id="RHEA-COMP:9685"/>
        <dbReference type="Rhea" id="RHEA-COMP:9945"/>
        <dbReference type="ChEBI" id="CHEBI:57705"/>
        <dbReference type="ChEBI" id="CHEBI:64479"/>
        <dbReference type="ChEBI" id="CHEBI:78827"/>
        <dbReference type="ChEBI" id="CHEBI:173225"/>
        <dbReference type="EC" id="2.3.1.129"/>
    </reaction>
</comment>
<comment type="pathway">
    <text evidence="1">Glycolipid biosynthesis; lipid IV(A) biosynthesis; lipid IV(A) from (3R)-3-hydroxytetradecanoyl-[acyl-carrier-protein] and UDP-N-acetyl-alpha-D-glucosamine: step 1/6.</text>
</comment>
<comment type="subunit">
    <text evidence="1">Homotrimer.</text>
</comment>
<comment type="subcellular location">
    <subcellularLocation>
        <location evidence="1">Cytoplasm</location>
    </subcellularLocation>
</comment>
<comment type="similarity">
    <text evidence="1">Belongs to the transferase hexapeptide repeat family. LpxA subfamily.</text>
</comment>
<accession>C3K607</accession>
<gene>
    <name evidence="1" type="primary">lpxA</name>
    <name type="ordered locus">PFLU_1282</name>
</gene>
<feature type="chain" id="PRO_1000205797" description="Acyl-[acyl-carrier-protein]--UDP-N-acetylglucosamine O-acyltransferase">
    <location>
        <begin position="1"/>
        <end position="258"/>
    </location>
</feature>
<proteinExistence type="inferred from homology"/>